<sequence>MTDLSKKVRAWGRRLLVGTAAAVTLPGLIGLAGGAPTAGAFSRPGLPVEYLQVPSAGMGRNIKVQFQSGGNNSPAVYLLDGLRAQDDYNGWDINTPAFEWYYQSGLSIIMPVGGQSSFYSDWYSPACGKAGCTTYKWETFLTSELPQYLQSNKSVKPTGSAAVGISMAGSSALILAAYHPQQFIYAGSLSALMDPSQGMGPSLIGLAMGDAGGYKASDMWGPSSDPAWQRNDPTIQIPKLVGNNTRLWVYCGNGTPSELGGANMPAEFLENFVRSSNLKFQDAYNAAGGHNAVFHFDQNGTHSWEYWGAQLNAMKPDLQGTLGATPGGGG</sequence>
<feature type="signal peptide" evidence="1">
    <location>
        <begin position="1"/>
        <end position="40"/>
    </location>
</feature>
<feature type="chain" id="PRO_0000000221" description="Diacylglycerol acyltransferase/mycolyltransferase Ag85B">
    <location>
        <begin position="41"/>
        <end position="330"/>
    </location>
</feature>
<feature type="region of interest" description="Fibronectin-binding">
    <location>
        <begin position="98"/>
        <end position="108"/>
    </location>
</feature>
<feature type="active site" description="Nucleophile" evidence="1">
    <location>
        <position position="166"/>
    </location>
</feature>
<feature type="active site" evidence="1">
    <location>
        <position position="270"/>
    </location>
</feature>
<feature type="active site" evidence="1">
    <location>
        <position position="302"/>
    </location>
</feature>
<feature type="binding site" evidence="1">
    <location>
        <begin position="82"/>
        <end position="83"/>
    </location>
    <ligand>
        <name>substrate</name>
    </ligand>
</feature>
<feature type="binding site" evidence="1">
    <location>
        <position position="166"/>
    </location>
    <ligand>
        <name>substrate</name>
    </ligand>
</feature>
<feature type="binding site" evidence="1">
    <location>
        <position position="194"/>
    </location>
    <ligand>
        <name>substrate</name>
    </ligand>
</feature>
<feature type="binding site" evidence="1">
    <location>
        <begin position="272"/>
        <end position="275"/>
    </location>
    <ligand>
        <name>substrate</name>
    </ligand>
</feature>
<feature type="binding site" evidence="1">
    <location>
        <position position="279"/>
    </location>
    <ligand>
        <name>substrate</name>
    </ligand>
</feature>
<feature type="binding site" evidence="1">
    <location>
        <begin position="302"/>
        <end position="304"/>
    </location>
    <ligand>
        <name>substrate</name>
    </ligand>
</feature>
<feature type="disulfide bond" evidence="1">
    <location>
        <begin position="127"/>
        <end position="132"/>
    </location>
</feature>
<proteinExistence type="inferred from homology"/>
<gene>
    <name type="primary">fbpB</name>
</gene>
<organism>
    <name type="scientific">Mycobacterium scrofulaceum</name>
    <dbReference type="NCBI Taxonomy" id="1783"/>
    <lineage>
        <taxon>Bacteria</taxon>
        <taxon>Bacillati</taxon>
        <taxon>Actinomycetota</taxon>
        <taxon>Actinomycetes</taxon>
        <taxon>Mycobacteriales</taxon>
        <taxon>Mycobacteriaceae</taxon>
        <taxon>Mycobacterium</taxon>
    </lineage>
</organism>
<keyword id="KW-0012">Acyltransferase</keyword>
<keyword id="KW-1015">Disulfide bond</keyword>
<keyword id="KW-0964">Secreted</keyword>
<keyword id="KW-0732">Signal</keyword>
<keyword id="KW-0808">Transferase</keyword>
<comment type="function">
    <text evidence="1">The antigen 85 proteins (FbpA, FbpB, FbpC) are responsible for the high affinity of mycobacteria for fibronectin, a large adhesive glycoprotein, which facilitates the attachment of M.tuberculosis to murine alveolar macrophages (AMs). They also help to maintain the integrity of the cell wall by catalyzing the transfer of mycolic acids to cell wall arabinogalactan and through the synthesis of alpha,alpha-trehalose dimycolate (TDM, cord factor). They catalyze the transfer of a mycoloyl residue from one molecule of alpha,alpha-trehalose monomycolate (TMM) to another TMM, leading to the formation of TDM (By similarity).</text>
</comment>
<comment type="catalytic activity">
    <reaction>
        <text>2 alpha,alpha'-trehalose 6-mycolate = alpha,alpha'-trehalose 6,6'-bismycolate + alpha,alpha-trehalose</text>
        <dbReference type="Rhea" id="RHEA:23472"/>
        <dbReference type="ChEBI" id="CHEBI:16551"/>
        <dbReference type="ChEBI" id="CHEBI:18195"/>
        <dbReference type="ChEBI" id="CHEBI:18234"/>
        <dbReference type="EC" id="2.3.1.122"/>
    </reaction>
</comment>
<comment type="catalytic activity">
    <reaction>
        <text>an acyl-CoA + a 1,2-diacyl-sn-glycerol = a triacyl-sn-glycerol + CoA</text>
        <dbReference type="Rhea" id="RHEA:10868"/>
        <dbReference type="ChEBI" id="CHEBI:17815"/>
        <dbReference type="ChEBI" id="CHEBI:57287"/>
        <dbReference type="ChEBI" id="CHEBI:58342"/>
        <dbReference type="ChEBI" id="CHEBI:64615"/>
        <dbReference type="EC" id="2.3.1.20"/>
    </reaction>
</comment>
<comment type="subcellular location">
    <subcellularLocation>
        <location evidence="1">Secreted</location>
    </subcellularLocation>
</comment>
<comment type="similarity">
    <text evidence="2">Belongs to the mycobacterial A85 antigen family.</text>
</comment>
<dbReference type="EC" id="2.3.1.122"/>
<dbReference type="EC" id="2.3.1.20"/>
<dbReference type="EMBL" id="D26187">
    <property type="protein sequence ID" value="BAA05332.1"/>
    <property type="molecule type" value="Genomic_DNA"/>
</dbReference>
<dbReference type="RefSeq" id="WP_083178548.1">
    <property type="nucleotide sequence ID" value="NZ_MVIJ01000029.1"/>
</dbReference>
<dbReference type="SMR" id="Q50397"/>
<dbReference type="STRING" id="1783.BST44_18455"/>
<dbReference type="ESTHER" id="mycsc-a85b">
    <property type="family name" value="A85-Mycolyl-transferase"/>
</dbReference>
<dbReference type="OrthoDB" id="4366784at2"/>
<dbReference type="GO" id="GO:0005576">
    <property type="term" value="C:extracellular region"/>
    <property type="evidence" value="ECO:0007669"/>
    <property type="project" value="UniProtKB-SubCell"/>
</dbReference>
<dbReference type="GO" id="GO:0004144">
    <property type="term" value="F:diacylglycerol O-acyltransferase activity"/>
    <property type="evidence" value="ECO:0007669"/>
    <property type="project" value="UniProtKB-EC"/>
</dbReference>
<dbReference type="GO" id="GO:0050348">
    <property type="term" value="F:trehalose O-mycolyltransferase activity"/>
    <property type="evidence" value="ECO:0007669"/>
    <property type="project" value="UniProtKB-EC"/>
</dbReference>
<dbReference type="FunFam" id="3.40.50.1820:FF:000086">
    <property type="entry name" value="Diacylglycerol acyltransferase/mycolyltransferase Ag85C"/>
    <property type="match status" value="1"/>
</dbReference>
<dbReference type="Gene3D" id="3.40.50.1820">
    <property type="entry name" value="alpha/beta hydrolase"/>
    <property type="match status" value="1"/>
</dbReference>
<dbReference type="InterPro" id="IPR029058">
    <property type="entry name" value="AB_hydrolase_fold"/>
</dbReference>
<dbReference type="InterPro" id="IPR000801">
    <property type="entry name" value="Esterase-like"/>
</dbReference>
<dbReference type="InterPro" id="IPR050583">
    <property type="entry name" value="Mycobacterial_A85_antigen"/>
</dbReference>
<dbReference type="InterPro" id="IPR006311">
    <property type="entry name" value="TAT_signal"/>
</dbReference>
<dbReference type="PANTHER" id="PTHR48098:SF1">
    <property type="entry name" value="DIACYLGLYCEROL ACYLTRANSFERASE_MYCOLYLTRANSFERASE AG85A"/>
    <property type="match status" value="1"/>
</dbReference>
<dbReference type="PANTHER" id="PTHR48098">
    <property type="entry name" value="ENTEROCHELIN ESTERASE-RELATED"/>
    <property type="match status" value="1"/>
</dbReference>
<dbReference type="Pfam" id="PF00756">
    <property type="entry name" value="Esterase"/>
    <property type="match status" value="1"/>
</dbReference>
<dbReference type="SUPFAM" id="SSF53474">
    <property type="entry name" value="alpha/beta-Hydrolases"/>
    <property type="match status" value="1"/>
</dbReference>
<dbReference type="PROSITE" id="PS51318">
    <property type="entry name" value="TAT"/>
    <property type="match status" value="1"/>
</dbReference>
<reference key="1">
    <citation type="journal article" date="1994" name="Scand. J. Immunol.">
        <title>Cloning, sequencing and expression in Escherichia coli of the gene for alpha antigen from Mycobacterium scrofulaceum.</title>
        <authorList>
            <person name="Takano M."/>
            <person name="Ohara N."/>
            <person name="Mizuno A."/>
            <person name="Yamada T."/>
        </authorList>
    </citation>
    <scope>NUCLEOTIDE SEQUENCE [GENOMIC DNA]</scope>
    <source>
        <strain>ATCC 19981 / DSM 43992 / JCM 6381 / NCTC 10803 / TMC 1323</strain>
    </source>
</reference>
<accession>Q50397</accession>
<evidence type="ECO:0000250" key="1"/>
<evidence type="ECO:0000305" key="2"/>
<name>A85B_MYCSC</name>
<protein>
    <recommendedName>
        <fullName>Diacylglycerol acyltransferase/mycolyltransferase Ag85B</fullName>
        <shortName>DGAT</shortName>
        <ecNumber>2.3.1.122</ecNumber>
        <ecNumber>2.3.1.20</ecNumber>
    </recommendedName>
    <alternativeName>
        <fullName>30 kDa extracellular protein</fullName>
    </alternativeName>
    <alternativeName>
        <fullName>Acyl-CoA:diacylglycerol acyltransferase</fullName>
    </alternativeName>
    <alternativeName>
        <fullName>Antigen 85 complex B</fullName>
        <shortName>85B</shortName>
        <shortName>Ag85B</shortName>
    </alternativeName>
    <alternativeName>
        <fullName>Extracellular alpha-antigen</fullName>
    </alternativeName>
    <alternativeName>
        <fullName>Fibronectin-binding protein B</fullName>
        <shortName>Fbps B</shortName>
    </alternativeName>
</protein>